<organism>
    <name type="scientific">Beijerinckia indica subsp. indica (strain ATCC 9039 / DSM 1715 / NCIMB 8712)</name>
    <dbReference type="NCBI Taxonomy" id="395963"/>
    <lineage>
        <taxon>Bacteria</taxon>
        <taxon>Pseudomonadati</taxon>
        <taxon>Pseudomonadota</taxon>
        <taxon>Alphaproteobacteria</taxon>
        <taxon>Hyphomicrobiales</taxon>
        <taxon>Beijerinckiaceae</taxon>
        <taxon>Beijerinckia</taxon>
    </lineage>
</organism>
<reference key="1">
    <citation type="journal article" date="2010" name="J. Bacteriol.">
        <title>Complete genome sequence of Beijerinckia indica subsp. indica.</title>
        <authorList>
            <person name="Tamas I."/>
            <person name="Dedysh S.N."/>
            <person name="Liesack W."/>
            <person name="Stott M.B."/>
            <person name="Alam M."/>
            <person name="Murrell J.C."/>
            <person name="Dunfield P.F."/>
        </authorList>
    </citation>
    <scope>NUCLEOTIDE SEQUENCE [LARGE SCALE GENOMIC DNA]</scope>
    <source>
        <strain>ATCC 9039 / DSM 1715 / NCIMB 8712</strain>
    </source>
</reference>
<keyword id="KW-1185">Reference proteome</keyword>
<keyword id="KW-0687">Ribonucleoprotein</keyword>
<keyword id="KW-0689">Ribosomal protein</keyword>
<keyword id="KW-0694">RNA-binding</keyword>
<keyword id="KW-0699">rRNA-binding</keyword>
<proteinExistence type="inferred from homology"/>
<sequence length="151" mass="17527">MALYEHVYLARQDISAQQVEALTEQLKSVIESFQGKVTKVEYWGVKSLAYRIKKNRKAHFSLLNIEAPAAALTEMERQMGINEDVLRFMTLRVEEHEQGPSAMMRKRDDDDRGERGERPRGPRPERGERGERGERGPRRPREDNIGEEGLY</sequence>
<evidence type="ECO:0000255" key="1">
    <source>
        <dbReference type="HAMAP-Rule" id="MF_00360"/>
    </source>
</evidence>
<evidence type="ECO:0000256" key="2">
    <source>
        <dbReference type="SAM" id="MobiDB-lite"/>
    </source>
</evidence>
<evidence type="ECO:0000305" key="3"/>
<feature type="chain" id="PRO_1000120709" description="Small ribosomal subunit protein bS6">
    <location>
        <begin position="1"/>
        <end position="151"/>
    </location>
</feature>
<feature type="region of interest" description="Disordered" evidence="2">
    <location>
        <begin position="94"/>
        <end position="151"/>
    </location>
</feature>
<feature type="compositionally biased region" description="Basic and acidic residues" evidence="2">
    <location>
        <begin position="105"/>
        <end position="144"/>
    </location>
</feature>
<protein>
    <recommendedName>
        <fullName evidence="1">Small ribosomal subunit protein bS6</fullName>
    </recommendedName>
    <alternativeName>
        <fullName evidence="3">30S ribosomal protein S6</fullName>
    </alternativeName>
</protein>
<accession>B2IHD1</accession>
<gene>
    <name evidence="1" type="primary">rpsF</name>
    <name type="ordered locus">Bind_2303</name>
</gene>
<comment type="function">
    <text evidence="1">Binds together with bS18 to 16S ribosomal RNA.</text>
</comment>
<comment type="similarity">
    <text evidence="1">Belongs to the bacterial ribosomal protein bS6 family.</text>
</comment>
<name>RS6_BEII9</name>
<dbReference type="EMBL" id="CP001016">
    <property type="protein sequence ID" value="ACB95916.1"/>
    <property type="molecule type" value="Genomic_DNA"/>
</dbReference>
<dbReference type="RefSeq" id="WP_012385269.1">
    <property type="nucleotide sequence ID" value="NC_010581.1"/>
</dbReference>
<dbReference type="SMR" id="B2IHD1"/>
<dbReference type="STRING" id="395963.Bind_2303"/>
<dbReference type="KEGG" id="bid:Bind_2303"/>
<dbReference type="eggNOG" id="COG0360">
    <property type="taxonomic scope" value="Bacteria"/>
</dbReference>
<dbReference type="HOGENOM" id="CLU_113441_2_0_5"/>
<dbReference type="OrthoDB" id="9812702at2"/>
<dbReference type="Proteomes" id="UP000001695">
    <property type="component" value="Chromosome"/>
</dbReference>
<dbReference type="GO" id="GO:0022627">
    <property type="term" value="C:cytosolic small ribosomal subunit"/>
    <property type="evidence" value="ECO:0007669"/>
    <property type="project" value="TreeGrafter"/>
</dbReference>
<dbReference type="GO" id="GO:0070181">
    <property type="term" value="F:small ribosomal subunit rRNA binding"/>
    <property type="evidence" value="ECO:0007669"/>
    <property type="project" value="TreeGrafter"/>
</dbReference>
<dbReference type="GO" id="GO:0003735">
    <property type="term" value="F:structural constituent of ribosome"/>
    <property type="evidence" value="ECO:0007669"/>
    <property type="project" value="InterPro"/>
</dbReference>
<dbReference type="GO" id="GO:0006412">
    <property type="term" value="P:translation"/>
    <property type="evidence" value="ECO:0007669"/>
    <property type="project" value="UniProtKB-UniRule"/>
</dbReference>
<dbReference type="CDD" id="cd00473">
    <property type="entry name" value="bS6"/>
    <property type="match status" value="1"/>
</dbReference>
<dbReference type="Gene3D" id="3.30.70.60">
    <property type="match status" value="1"/>
</dbReference>
<dbReference type="HAMAP" id="MF_00360">
    <property type="entry name" value="Ribosomal_bS6"/>
    <property type="match status" value="1"/>
</dbReference>
<dbReference type="InterPro" id="IPR000529">
    <property type="entry name" value="Ribosomal_bS6"/>
</dbReference>
<dbReference type="InterPro" id="IPR035980">
    <property type="entry name" value="Ribosomal_bS6_sf"/>
</dbReference>
<dbReference type="InterPro" id="IPR020814">
    <property type="entry name" value="Ribosomal_S6_plastid/chlpt"/>
</dbReference>
<dbReference type="InterPro" id="IPR014717">
    <property type="entry name" value="Transl_elong_EF1B/ribsomal_bS6"/>
</dbReference>
<dbReference type="NCBIfam" id="TIGR00166">
    <property type="entry name" value="S6"/>
    <property type="match status" value="1"/>
</dbReference>
<dbReference type="PANTHER" id="PTHR21011">
    <property type="entry name" value="MITOCHONDRIAL 28S RIBOSOMAL PROTEIN S6"/>
    <property type="match status" value="1"/>
</dbReference>
<dbReference type="PANTHER" id="PTHR21011:SF1">
    <property type="entry name" value="SMALL RIBOSOMAL SUBUNIT PROTEIN BS6M"/>
    <property type="match status" value="1"/>
</dbReference>
<dbReference type="Pfam" id="PF01250">
    <property type="entry name" value="Ribosomal_S6"/>
    <property type="match status" value="1"/>
</dbReference>
<dbReference type="SUPFAM" id="SSF54995">
    <property type="entry name" value="Ribosomal protein S6"/>
    <property type="match status" value="1"/>
</dbReference>